<reference key="1">
    <citation type="journal article" date="2011" name="Stand. Genomic Sci.">
        <title>Complete genome sequence of Rhodospirillum rubrum type strain (S1).</title>
        <authorList>
            <person name="Munk A.C."/>
            <person name="Copeland A."/>
            <person name="Lucas S."/>
            <person name="Lapidus A."/>
            <person name="Del Rio T.G."/>
            <person name="Barry K."/>
            <person name="Detter J.C."/>
            <person name="Hammon N."/>
            <person name="Israni S."/>
            <person name="Pitluck S."/>
            <person name="Brettin T."/>
            <person name="Bruce D."/>
            <person name="Han C."/>
            <person name="Tapia R."/>
            <person name="Gilna P."/>
            <person name="Schmutz J."/>
            <person name="Larimer F."/>
            <person name="Land M."/>
            <person name="Kyrpides N.C."/>
            <person name="Mavromatis K."/>
            <person name="Richardson P."/>
            <person name="Rohde M."/>
            <person name="Goeker M."/>
            <person name="Klenk H.P."/>
            <person name="Zhang Y."/>
            <person name="Roberts G.P."/>
            <person name="Reslewic S."/>
            <person name="Schwartz D.C."/>
        </authorList>
    </citation>
    <scope>NUCLEOTIDE SEQUENCE [LARGE SCALE GENOMIC DNA]</scope>
    <source>
        <strain>ATCC 11170 / ATH 1.1.1 / DSM 467 / LMG 4362 / NCIMB 8255 / S1</strain>
    </source>
</reference>
<reference key="2">
    <citation type="journal article" date="2019" name="Cell Chem. Biol.">
        <title>A soluble metabolon synthesizes the isoprenoid lipid ubiquinone.</title>
        <authorList>
            <person name="Hajj Chehade M."/>
            <person name="Pelosi L."/>
            <person name="Fyfe C.D."/>
            <person name="Loiseau L."/>
            <person name="Rascalou B."/>
            <person name="Brugiere S."/>
            <person name="Kazemzadeh K."/>
            <person name="Vo C.D."/>
            <person name="Ciccone L."/>
            <person name="Aussel L."/>
            <person name="Coute Y."/>
            <person name="Fontecave M."/>
            <person name="Barras F."/>
            <person name="Lombard M."/>
            <person name="Pierrel F."/>
        </authorList>
    </citation>
    <scope>CATALYTIC ACTIVITY</scope>
    <scope>PATHWAY</scope>
</reference>
<organism>
    <name type="scientific">Rhodospirillum rubrum (strain ATCC 11170 / ATH 1.1.1 / DSM 467 / LMG 4362 / NCIMB 8255 / S1)</name>
    <dbReference type="NCBI Taxonomy" id="269796"/>
    <lineage>
        <taxon>Bacteria</taxon>
        <taxon>Pseudomonadati</taxon>
        <taxon>Pseudomonadota</taxon>
        <taxon>Alphaproteobacteria</taxon>
        <taxon>Rhodospirillales</taxon>
        <taxon>Rhodospirillaceae</taxon>
        <taxon>Rhodospirillum</taxon>
    </lineage>
</organism>
<sequence length="212" mass="22894">MTSPSSRTPRGSTPPFEPSADELVLHASGRKTAEDRLPGDPSPAALIDRFLRVDQAGEHGAVRIYQGQLAVLGRRSANVGVLRHMLAQEEVHLATFDKLVADRRARPTLLGPLWHVAGFALGAGTALLGEKAAMACTTAIEEAIDGHYKDQYDRLGDDELPLKATIDTFRREELEHRDIGYANGARQAPAFPVLSGAIKAGAKLAIWVSERV</sequence>
<gene>
    <name evidence="1 4" type="primary">coq7</name>
    <name evidence="5" type="ordered locus">Rru_A3498</name>
</gene>
<name>COQ7_RHORT</name>
<evidence type="ECO:0000255" key="1">
    <source>
        <dbReference type="HAMAP-Rule" id="MF_01658"/>
    </source>
</evidence>
<evidence type="ECO:0000256" key="2">
    <source>
        <dbReference type="SAM" id="MobiDB-lite"/>
    </source>
</evidence>
<evidence type="ECO:0000269" key="3">
    <source>
    </source>
</evidence>
<evidence type="ECO:0000303" key="4">
    <source>
    </source>
</evidence>
<evidence type="ECO:0000312" key="5">
    <source>
        <dbReference type="EMBL" id="ABC24292.1"/>
    </source>
</evidence>
<proteinExistence type="evidence at protein level"/>
<accession>Q2RNK3</accession>
<dbReference type="EC" id="1.14.99.60" evidence="1 3"/>
<dbReference type="EMBL" id="CP000230">
    <property type="protein sequence ID" value="ABC24292.1"/>
    <property type="molecule type" value="Genomic_DNA"/>
</dbReference>
<dbReference type="RefSeq" id="WP_011391245.1">
    <property type="nucleotide sequence ID" value="NC_007643.1"/>
</dbReference>
<dbReference type="RefSeq" id="YP_428579.1">
    <property type="nucleotide sequence ID" value="NC_007643.1"/>
</dbReference>
<dbReference type="SMR" id="Q2RNK3"/>
<dbReference type="STRING" id="269796.Rru_A3498"/>
<dbReference type="EnsemblBacteria" id="ABC24292">
    <property type="protein sequence ID" value="ABC24292"/>
    <property type="gene ID" value="Rru_A3498"/>
</dbReference>
<dbReference type="KEGG" id="rru:Rru_A3498"/>
<dbReference type="PATRIC" id="fig|269796.9.peg.3615"/>
<dbReference type="eggNOG" id="COG2941">
    <property type="taxonomic scope" value="Bacteria"/>
</dbReference>
<dbReference type="HOGENOM" id="CLU_071892_2_0_5"/>
<dbReference type="PhylomeDB" id="Q2RNK3"/>
<dbReference type="UniPathway" id="UPA00232"/>
<dbReference type="Proteomes" id="UP000001929">
    <property type="component" value="Chromosome"/>
</dbReference>
<dbReference type="GO" id="GO:0005886">
    <property type="term" value="C:plasma membrane"/>
    <property type="evidence" value="ECO:0007669"/>
    <property type="project" value="UniProtKB-SubCell"/>
</dbReference>
<dbReference type="GO" id="GO:0008682">
    <property type="term" value="F:3-demethoxyubiquinol 3-hydroxylase activity"/>
    <property type="evidence" value="ECO:0007669"/>
    <property type="project" value="UniProtKB-EC"/>
</dbReference>
<dbReference type="GO" id="GO:0046872">
    <property type="term" value="F:metal ion binding"/>
    <property type="evidence" value="ECO:0007669"/>
    <property type="project" value="UniProtKB-KW"/>
</dbReference>
<dbReference type="GO" id="GO:0006744">
    <property type="term" value="P:ubiquinone biosynthetic process"/>
    <property type="evidence" value="ECO:0007669"/>
    <property type="project" value="UniProtKB-UniRule"/>
</dbReference>
<dbReference type="CDD" id="cd01042">
    <property type="entry name" value="DMQH"/>
    <property type="match status" value="1"/>
</dbReference>
<dbReference type="HAMAP" id="MF_01658">
    <property type="entry name" value="COQ7"/>
    <property type="match status" value="1"/>
</dbReference>
<dbReference type="InterPro" id="IPR009078">
    <property type="entry name" value="Ferritin-like_SF"/>
</dbReference>
<dbReference type="InterPro" id="IPR011566">
    <property type="entry name" value="Ubq_synth_Coq7"/>
</dbReference>
<dbReference type="PANTHER" id="PTHR11237:SF4">
    <property type="entry name" value="5-DEMETHOXYUBIQUINONE HYDROXYLASE, MITOCHONDRIAL"/>
    <property type="match status" value="1"/>
</dbReference>
<dbReference type="PANTHER" id="PTHR11237">
    <property type="entry name" value="COENZYME Q10 BIOSYNTHESIS PROTEIN 7"/>
    <property type="match status" value="1"/>
</dbReference>
<dbReference type="Pfam" id="PF03232">
    <property type="entry name" value="COQ7"/>
    <property type="match status" value="1"/>
</dbReference>
<dbReference type="SUPFAM" id="SSF47240">
    <property type="entry name" value="Ferritin-like"/>
    <property type="match status" value="1"/>
</dbReference>
<comment type="function">
    <text evidence="1">Catalyzes the hydroxylation of 2-nonaprenyl-3-methyl-6-methoxy-1,4-benzoquinol during ubiquinone biosynthesis.</text>
</comment>
<comment type="catalytic activity">
    <reaction evidence="1 3">
        <text>a 5-methoxy-2-methyl-3-(all-trans-polyprenyl)benzene-1,4-diol + AH2 + O2 = a 3-demethylubiquinol + A + H2O</text>
        <dbReference type="Rhea" id="RHEA:50908"/>
        <dbReference type="Rhea" id="RHEA-COMP:10859"/>
        <dbReference type="Rhea" id="RHEA-COMP:10914"/>
        <dbReference type="ChEBI" id="CHEBI:13193"/>
        <dbReference type="ChEBI" id="CHEBI:15377"/>
        <dbReference type="ChEBI" id="CHEBI:15379"/>
        <dbReference type="ChEBI" id="CHEBI:17499"/>
        <dbReference type="ChEBI" id="CHEBI:84167"/>
        <dbReference type="ChEBI" id="CHEBI:84422"/>
        <dbReference type="EC" id="1.14.99.60"/>
    </reaction>
</comment>
<comment type="cofactor">
    <cofactor evidence="1">
        <name>Fe cation</name>
        <dbReference type="ChEBI" id="CHEBI:24875"/>
    </cofactor>
    <text evidence="1">Binds 2 iron ions per subunit.</text>
</comment>
<comment type="pathway">
    <text evidence="1 3">Cofactor biosynthesis; ubiquinone biosynthesis.</text>
</comment>
<comment type="subcellular location">
    <subcellularLocation>
        <location evidence="1">Cell membrane</location>
        <topology evidence="1">Peripheral membrane protein</topology>
    </subcellularLocation>
</comment>
<comment type="similarity">
    <text evidence="1">Belongs to the COQ7 family.</text>
</comment>
<protein>
    <recommendedName>
        <fullName evidence="1">3-demethoxyubiquinol 3-hydroxylase</fullName>
        <shortName evidence="1">DMQ hydroxylase</shortName>
        <ecNumber evidence="1 3">1.14.99.60</ecNumber>
    </recommendedName>
    <alternativeName>
        <fullName evidence="1">2-nonaprenyl-3-methyl-6-methoxy-1,4-benzoquinol hydroxylase</fullName>
    </alternativeName>
</protein>
<keyword id="KW-1003">Cell membrane</keyword>
<keyword id="KW-0408">Iron</keyword>
<keyword id="KW-0472">Membrane</keyword>
<keyword id="KW-0479">Metal-binding</keyword>
<keyword id="KW-0503">Monooxygenase</keyword>
<keyword id="KW-0560">Oxidoreductase</keyword>
<keyword id="KW-1185">Reference proteome</keyword>
<keyword id="KW-0831">Ubiquinone biosynthesis</keyword>
<feature type="chain" id="PRO_0000447672" description="3-demethoxyubiquinol 3-hydroxylase">
    <location>
        <begin position="1"/>
        <end position="212"/>
    </location>
</feature>
<feature type="region of interest" description="Disordered" evidence="2">
    <location>
        <begin position="1"/>
        <end position="22"/>
    </location>
</feature>
<feature type="compositionally biased region" description="Low complexity" evidence="2">
    <location>
        <begin position="1"/>
        <end position="14"/>
    </location>
</feature>
<feature type="binding site" evidence="1">
    <location>
        <position position="58"/>
    </location>
    <ligand>
        <name>Fe cation</name>
        <dbReference type="ChEBI" id="CHEBI:24875"/>
        <label>1</label>
    </ligand>
</feature>
<feature type="binding site" evidence="1">
    <location>
        <position position="89"/>
    </location>
    <ligand>
        <name>Fe cation</name>
        <dbReference type="ChEBI" id="CHEBI:24875"/>
        <label>1</label>
    </ligand>
</feature>
<feature type="binding site" evidence="1">
    <location>
        <position position="89"/>
    </location>
    <ligand>
        <name>Fe cation</name>
        <dbReference type="ChEBI" id="CHEBI:24875"/>
        <label>2</label>
    </ligand>
</feature>
<feature type="binding site" evidence="1">
    <location>
        <position position="92"/>
    </location>
    <ligand>
        <name>Fe cation</name>
        <dbReference type="ChEBI" id="CHEBI:24875"/>
        <label>1</label>
    </ligand>
</feature>
<feature type="binding site" evidence="1">
    <location>
        <position position="141"/>
    </location>
    <ligand>
        <name>Fe cation</name>
        <dbReference type="ChEBI" id="CHEBI:24875"/>
        <label>2</label>
    </ligand>
</feature>
<feature type="binding site" evidence="1">
    <location>
        <position position="173"/>
    </location>
    <ligand>
        <name>Fe cation</name>
        <dbReference type="ChEBI" id="CHEBI:24875"/>
        <label>1</label>
    </ligand>
</feature>
<feature type="binding site" evidence="1">
    <location>
        <position position="173"/>
    </location>
    <ligand>
        <name>Fe cation</name>
        <dbReference type="ChEBI" id="CHEBI:24875"/>
        <label>2</label>
    </ligand>
</feature>
<feature type="binding site" evidence="1">
    <location>
        <position position="176"/>
    </location>
    <ligand>
        <name>Fe cation</name>
        <dbReference type="ChEBI" id="CHEBI:24875"/>
        <label>2</label>
    </ligand>
</feature>